<accession>Q7N869</accession>
<keyword id="KW-0963">Cytoplasm</keyword>
<keyword id="KW-0460">Magnesium</keyword>
<keyword id="KW-0479">Metal-binding</keyword>
<keyword id="KW-0566">Pantothenate biosynthesis</keyword>
<keyword id="KW-1185">Reference proteome</keyword>
<keyword id="KW-0808">Transferase</keyword>
<sequence>MKPMTMTDLNQLKKEKRKFATITAYDASFAHLFAEQGIDVMLVGDSLGMTVQGADTTIPVTVEDIVYHTRCVRAGTPYTFIIADMPFMSYATPEQSCENAAKLMRAGANMVKLEGGSWLYDTINMLTERSVPVCAHLGLTPQSVHILGGYKVQGRDEVSANQLIKDAITLEKAGIQLLVLECVPVDLAKRITDELQIPVIGIGAGNVTDGQVLVMHDTLGITVSPPKFVKNFLEEAGNIRDAIRLYKEQVESGIYPGKEHSFY</sequence>
<organism>
    <name type="scientific">Photorhabdus laumondii subsp. laumondii (strain DSM 15139 / CIP 105565 / TT01)</name>
    <name type="common">Photorhabdus luminescens subsp. laumondii</name>
    <dbReference type="NCBI Taxonomy" id="243265"/>
    <lineage>
        <taxon>Bacteria</taxon>
        <taxon>Pseudomonadati</taxon>
        <taxon>Pseudomonadota</taxon>
        <taxon>Gammaproteobacteria</taxon>
        <taxon>Enterobacterales</taxon>
        <taxon>Morganellaceae</taxon>
        <taxon>Photorhabdus</taxon>
    </lineage>
</organism>
<proteinExistence type="inferred from homology"/>
<evidence type="ECO:0000255" key="1">
    <source>
        <dbReference type="HAMAP-Rule" id="MF_00156"/>
    </source>
</evidence>
<feature type="chain" id="PRO_0000184871" description="3-methyl-2-oxobutanoate hydroxymethyltransferase">
    <location>
        <begin position="1"/>
        <end position="263"/>
    </location>
</feature>
<feature type="active site" description="Proton acceptor" evidence="1">
    <location>
        <position position="181"/>
    </location>
</feature>
<feature type="binding site" evidence="1">
    <location>
        <begin position="45"/>
        <end position="46"/>
    </location>
    <ligand>
        <name>3-methyl-2-oxobutanoate</name>
        <dbReference type="ChEBI" id="CHEBI:11851"/>
    </ligand>
</feature>
<feature type="binding site" evidence="1">
    <location>
        <position position="45"/>
    </location>
    <ligand>
        <name>Mg(2+)</name>
        <dbReference type="ChEBI" id="CHEBI:18420"/>
    </ligand>
</feature>
<feature type="binding site" evidence="1">
    <location>
        <position position="84"/>
    </location>
    <ligand>
        <name>3-methyl-2-oxobutanoate</name>
        <dbReference type="ChEBI" id="CHEBI:11851"/>
    </ligand>
</feature>
<feature type="binding site" evidence="1">
    <location>
        <position position="84"/>
    </location>
    <ligand>
        <name>Mg(2+)</name>
        <dbReference type="ChEBI" id="CHEBI:18420"/>
    </ligand>
</feature>
<feature type="binding site" evidence="1">
    <location>
        <position position="112"/>
    </location>
    <ligand>
        <name>3-methyl-2-oxobutanoate</name>
        <dbReference type="ChEBI" id="CHEBI:11851"/>
    </ligand>
</feature>
<feature type="binding site" evidence="1">
    <location>
        <position position="114"/>
    </location>
    <ligand>
        <name>Mg(2+)</name>
        <dbReference type="ChEBI" id="CHEBI:18420"/>
    </ligand>
</feature>
<name>PANB_PHOLL</name>
<dbReference type="EC" id="2.1.2.11" evidence="1"/>
<dbReference type="EMBL" id="BX571861">
    <property type="protein sequence ID" value="CAE13167.1"/>
    <property type="molecule type" value="Genomic_DNA"/>
</dbReference>
<dbReference type="RefSeq" id="WP_011145240.1">
    <property type="nucleotide sequence ID" value="NC_005126.1"/>
</dbReference>
<dbReference type="SMR" id="Q7N869"/>
<dbReference type="STRING" id="243265.plu0872"/>
<dbReference type="GeneID" id="48847161"/>
<dbReference type="KEGG" id="plu:plu0872"/>
<dbReference type="eggNOG" id="COG0413">
    <property type="taxonomic scope" value="Bacteria"/>
</dbReference>
<dbReference type="HOGENOM" id="CLU_036645_1_0_6"/>
<dbReference type="OrthoDB" id="9781789at2"/>
<dbReference type="UniPathway" id="UPA00028">
    <property type="reaction ID" value="UER00003"/>
</dbReference>
<dbReference type="Proteomes" id="UP000002514">
    <property type="component" value="Chromosome"/>
</dbReference>
<dbReference type="GO" id="GO:0005737">
    <property type="term" value="C:cytoplasm"/>
    <property type="evidence" value="ECO:0007669"/>
    <property type="project" value="UniProtKB-SubCell"/>
</dbReference>
<dbReference type="GO" id="GO:0003864">
    <property type="term" value="F:3-methyl-2-oxobutanoate hydroxymethyltransferase activity"/>
    <property type="evidence" value="ECO:0007669"/>
    <property type="project" value="UniProtKB-UniRule"/>
</dbReference>
<dbReference type="GO" id="GO:0000287">
    <property type="term" value="F:magnesium ion binding"/>
    <property type="evidence" value="ECO:0007669"/>
    <property type="project" value="TreeGrafter"/>
</dbReference>
<dbReference type="GO" id="GO:0015940">
    <property type="term" value="P:pantothenate biosynthetic process"/>
    <property type="evidence" value="ECO:0007669"/>
    <property type="project" value="UniProtKB-UniRule"/>
</dbReference>
<dbReference type="CDD" id="cd06557">
    <property type="entry name" value="KPHMT-like"/>
    <property type="match status" value="1"/>
</dbReference>
<dbReference type="FunFam" id="3.20.20.60:FF:000003">
    <property type="entry name" value="3-methyl-2-oxobutanoate hydroxymethyltransferase"/>
    <property type="match status" value="1"/>
</dbReference>
<dbReference type="Gene3D" id="3.20.20.60">
    <property type="entry name" value="Phosphoenolpyruvate-binding domains"/>
    <property type="match status" value="1"/>
</dbReference>
<dbReference type="HAMAP" id="MF_00156">
    <property type="entry name" value="PanB"/>
    <property type="match status" value="1"/>
</dbReference>
<dbReference type="InterPro" id="IPR003700">
    <property type="entry name" value="Pantoate_hydroxy_MeTrfase"/>
</dbReference>
<dbReference type="InterPro" id="IPR015813">
    <property type="entry name" value="Pyrv/PenolPyrv_kinase-like_dom"/>
</dbReference>
<dbReference type="InterPro" id="IPR040442">
    <property type="entry name" value="Pyrv_kinase-like_dom_sf"/>
</dbReference>
<dbReference type="NCBIfam" id="TIGR00222">
    <property type="entry name" value="panB"/>
    <property type="match status" value="1"/>
</dbReference>
<dbReference type="NCBIfam" id="NF001452">
    <property type="entry name" value="PRK00311.1"/>
    <property type="match status" value="1"/>
</dbReference>
<dbReference type="PANTHER" id="PTHR20881">
    <property type="entry name" value="3-METHYL-2-OXOBUTANOATE HYDROXYMETHYLTRANSFERASE"/>
    <property type="match status" value="1"/>
</dbReference>
<dbReference type="PANTHER" id="PTHR20881:SF0">
    <property type="entry name" value="3-METHYL-2-OXOBUTANOATE HYDROXYMETHYLTRANSFERASE"/>
    <property type="match status" value="1"/>
</dbReference>
<dbReference type="Pfam" id="PF02548">
    <property type="entry name" value="Pantoate_transf"/>
    <property type="match status" value="1"/>
</dbReference>
<dbReference type="PIRSF" id="PIRSF000388">
    <property type="entry name" value="Pantoate_hydroxy_MeTrfase"/>
    <property type="match status" value="1"/>
</dbReference>
<dbReference type="SUPFAM" id="SSF51621">
    <property type="entry name" value="Phosphoenolpyruvate/pyruvate domain"/>
    <property type="match status" value="1"/>
</dbReference>
<protein>
    <recommendedName>
        <fullName evidence="1">3-methyl-2-oxobutanoate hydroxymethyltransferase</fullName>
        <ecNumber evidence="1">2.1.2.11</ecNumber>
    </recommendedName>
    <alternativeName>
        <fullName evidence="1">Ketopantoate hydroxymethyltransferase</fullName>
        <shortName evidence="1">KPHMT</shortName>
    </alternativeName>
</protein>
<gene>
    <name evidence="1" type="primary">panB</name>
    <name type="ordered locus">plu0872</name>
</gene>
<reference key="1">
    <citation type="journal article" date="2003" name="Nat. Biotechnol.">
        <title>The genome sequence of the entomopathogenic bacterium Photorhabdus luminescens.</title>
        <authorList>
            <person name="Duchaud E."/>
            <person name="Rusniok C."/>
            <person name="Frangeul L."/>
            <person name="Buchrieser C."/>
            <person name="Givaudan A."/>
            <person name="Taourit S."/>
            <person name="Bocs S."/>
            <person name="Boursaux-Eude C."/>
            <person name="Chandler M."/>
            <person name="Charles J.-F."/>
            <person name="Dassa E."/>
            <person name="Derose R."/>
            <person name="Derzelle S."/>
            <person name="Freyssinet G."/>
            <person name="Gaudriault S."/>
            <person name="Medigue C."/>
            <person name="Lanois A."/>
            <person name="Powell K."/>
            <person name="Siguier P."/>
            <person name="Vincent R."/>
            <person name="Wingate V."/>
            <person name="Zouine M."/>
            <person name="Glaser P."/>
            <person name="Boemare N."/>
            <person name="Danchin A."/>
            <person name="Kunst F."/>
        </authorList>
    </citation>
    <scope>NUCLEOTIDE SEQUENCE [LARGE SCALE GENOMIC DNA]</scope>
    <source>
        <strain>DSM 15139 / CIP 105565 / TT01</strain>
    </source>
</reference>
<comment type="function">
    <text evidence="1">Catalyzes the reversible reaction in which hydroxymethyl group from 5,10-methylenetetrahydrofolate is transferred onto alpha-ketoisovalerate to form ketopantoate.</text>
</comment>
<comment type="catalytic activity">
    <reaction evidence="1">
        <text>3-methyl-2-oxobutanoate + (6R)-5,10-methylene-5,6,7,8-tetrahydrofolate + H2O = 2-dehydropantoate + (6S)-5,6,7,8-tetrahydrofolate</text>
        <dbReference type="Rhea" id="RHEA:11824"/>
        <dbReference type="ChEBI" id="CHEBI:11561"/>
        <dbReference type="ChEBI" id="CHEBI:11851"/>
        <dbReference type="ChEBI" id="CHEBI:15377"/>
        <dbReference type="ChEBI" id="CHEBI:15636"/>
        <dbReference type="ChEBI" id="CHEBI:57453"/>
        <dbReference type="EC" id="2.1.2.11"/>
    </reaction>
</comment>
<comment type="cofactor">
    <cofactor evidence="1">
        <name>Mg(2+)</name>
        <dbReference type="ChEBI" id="CHEBI:18420"/>
    </cofactor>
    <text evidence="1">Binds 1 Mg(2+) ion per subunit.</text>
</comment>
<comment type="pathway">
    <text evidence="1">Cofactor biosynthesis; (R)-pantothenate biosynthesis; (R)-pantoate from 3-methyl-2-oxobutanoate: step 1/2.</text>
</comment>
<comment type="subunit">
    <text evidence="1">Homodecamer; pentamer of dimers.</text>
</comment>
<comment type="subcellular location">
    <subcellularLocation>
        <location evidence="1">Cytoplasm</location>
    </subcellularLocation>
</comment>
<comment type="similarity">
    <text evidence="1">Belongs to the PanB family.</text>
</comment>